<gene>
    <name evidence="1" type="primary">pqqB</name>
    <name type="ordered locus">PputGB1_0408</name>
</gene>
<keyword id="KW-0884">PQQ biosynthesis</keyword>
<keyword id="KW-0813">Transport</keyword>
<protein>
    <recommendedName>
        <fullName evidence="1">Coenzyme PQQ synthesis protein B</fullName>
    </recommendedName>
    <alternativeName>
        <fullName evidence="1">Pyrroloquinoline quinone biosynthesis protein B</fullName>
    </alternativeName>
</protein>
<proteinExistence type="inferred from homology"/>
<accession>B0KJ69</accession>
<name>PQQB_PSEPG</name>
<sequence>MYIQVLGSAAGGGFPQWNCNCVNCKGYRDGTLRATARTQSSIALSDDGVHWVLCNASPDIRAQLQAFAPMQPARALRDTGINAIVLLDSQIDHTTGLLSLREGCPHQVWCTDMVHQDLTTGFPLFNMLSHWNGGLQWNRIELEGSFVIEACPNLKFTPFPLRSAAPPYSPHRFDPHPGDNLGLLVEDTRTGGKLFYAPGLGQVDGKLLAMMHDADCLLVDGTLWEDDEMQRRGVGTRTGREMGHLAQNGPGGMLEVLDGFSRQRKVLIHINNTNPILDEDSPERAEVLRRGVEVAFDGMSIEL</sequence>
<comment type="function">
    <text evidence="1">May be involved in the transport of PQQ or its precursor to the periplasm.</text>
</comment>
<comment type="pathway">
    <text evidence="1">Cofactor biosynthesis; pyrroloquinoline quinone biosynthesis.</text>
</comment>
<comment type="similarity">
    <text evidence="1">Belongs to the PqqB family.</text>
</comment>
<feature type="chain" id="PRO_1000082783" description="Coenzyme PQQ synthesis protein B">
    <location>
        <begin position="1"/>
        <end position="303"/>
    </location>
</feature>
<dbReference type="EMBL" id="CP000926">
    <property type="protein sequence ID" value="ABY96319.1"/>
    <property type="molecule type" value="Genomic_DNA"/>
</dbReference>
<dbReference type="RefSeq" id="WP_012270177.1">
    <property type="nucleotide sequence ID" value="NC_010322.1"/>
</dbReference>
<dbReference type="SMR" id="B0KJ69"/>
<dbReference type="KEGG" id="ppg:PputGB1_0408"/>
<dbReference type="eggNOG" id="COG1235">
    <property type="taxonomic scope" value="Bacteria"/>
</dbReference>
<dbReference type="HOGENOM" id="CLU_061120_0_0_6"/>
<dbReference type="UniPathway" id="UPA00539"/>
<dbReference type="Proteomes" id="UP000002157">
    <property type="component" value="Chromosome"/>
</dbReference>
<dbReference type="GO" id="GO:0018189">
    <property type="term" value="P:pyrroloquinoline quinone biosynthetic process"/>
    <property type="evidence" value="ECO:0007669"/>
    <property type="project" value="UniProtKB-UniRule"/>
</dbReference>
<dbReference type="CDD" id="cd16274">
    <property type="entry name" value="PQQB-like_MBL-fold"/>
    <property type="match status" value="1"/>
</dbReference>
<dbReference type="Gene3D" id="3.60.15.10">
    <property type="entry name" value="Ribonuclease Z/Hydroxyacylglutathione hydrolase-like"/>
    <property type="match status" value="1"/>
</dbReference>
<dbReference type="HAMAP" id="MF_00653">
    <property type="entry name" value="PQQ_syn_PqqB"/>
    <property type="match status" value="1"/>
</dbReference>
<dbReference type="InterPro" id="IPR001279">
    <property type="entry name" value="Metallo-B-lactamas"/>
</dbReference>
<dbReference type="InterPro" id="IPR011842">
    <property type="entry name" value="PQQ_synth_PqqB"/>
</dbReference>
<dbReference type="InterPro" id="IPR036866">
    <property type="entry name" value="RibonucZ/Hydroxyglut_hydro"/>
</dbReference>
<dbReference type="NCBIfam" id="TIGR02108">
    <property type="entry name" value="PQQ_syn_pqqB"/>
    <property type="match status" value="1"/>
</dbReference>
<dbReference type="PANTHER" id="PTHR42663:SF7">
    <property type="entry name" value="COENZYME PQQ SYNTHESIS PROTEIN B"/>
    <property type="match status" value="1"/>
</dbReference>
<dbReference type="PANTHER" id="PTHR42663">
    <property type="entry name" value="HYDROLASE C777.06C-RELATED-RELATED"/>
    <property type="match status" value="1"/>
</dbReference>
<dbReference type="Pfam" id="PF12706">
    <property type="entry name" value="Lactamase_B_2"/>
    <property type="match status" value="1"/>
</dbReference>
<dbReference type="SUPFAM" id="SSF56281">
    <property type="entry name" value="Metallo-hydrolase/oxidoreductase"/>
    <property type="match status" value="1"/>
</dbReference>
<reference key="1">
    <citation type="submission" date="2008-01" db="EMBL/GenBank/DDBJ databases">
        <title>Complete sequence of Pseudomonas putida GB-1.</title>
        <authorList>
            <consortium name="US DOE Joint Genome Institute"/>
            <person name="Copeland A."/>
            <person name="Lucas S."/>
            <person name="Lapidus A."/>
            <person name="Barry K."/>
            <person name="Glavina del Rio T."/>
            <person name="Dalin E."/>
            <person name="Tice H."/>
            <person name="Pitluck S."/>
            <person name="Bruce D."/>
            <person name="Goodwin L."/>
            <person name="Chertkov O."/>
            <person name="Brettin T."/>
            <person name="Detter J.C."/>
            <person name="Han C."/>
            <person name="Kuske C.R."/>
            <person name="Schmutz J."/>
            <person name="Larimer F."/>
            <person name="Land M."/>
            <person name="Hauser L."/>
            <person name="Kyrpides N."/>
            <person name="Kim E."/>
            <person name="McCarthy J.K."/>
            <person name="Richardson P."/>
        </authorList>
    </citation>
    <scope>NUCLEOTIDE SEQUENCE [LARGE SCALE GENOMIC DNA]</scope>
    <source>
        <strain>GB-1</strain>
    </source>
</reference>
<organism>
    <name type="scientific">Pseudomonas putida (strain GB-1)</name>
    <dbReference type="NCBI Taxonomy" id="76869"/>
    <lineage>
        <taxon>Bacteria</taxon>
        <taxon>Pseudomonadati</taxon>
        <taxon>Pseudomonadota</taxon>
        <taxon>Gammaproteobacteria</taxon>
        <taxon>Pseudomonadales</taxon>
        <taxon>Pseudomonadaceae</taxon>
        <taxon>Pseudomonas</taxon>
    </lineage>
</organism>
<evidence type="ECO:0000255" key="1">
    <source>
        <dbReference type="HAMAP-Rule" id="MF_00653"/>
    </source>
</evidence>